<evidence type="ECO:0000255" key="1">
    <source>
        <dbReference type="HAMAP-Rule" id="MF_01647"/>
    </source>
</evidence>
<comment type="function">
    <text evidence="1">Converts 3-phenylpropionate-dihydrodiol (PP-dihydrodiol) and cinnamic acid-dihydrodiol (CI-dihydrodiol) into 3-(2,3-dihydroxylphenyl)propanoic acid (DHPP) and 2,3-dihydroxicinnamic acid (DHCI), respectively.</text>
</comment>
<comment type="catalytic activity">
    <reaction evidence="1">
        <text>3-(cis-5,6-dihydroxycyclohexa-1,3-dien-1-yl)propanoate + NAD(+) = 3-(2,3-dihydroxyphenyl)propanoate + NADH + H(+)</text>
        <dbReference type="Rhea" id="RHEA:25062"/>
        <dbReference type="ChEBI" id="CHEBI:15378"/>
        <dbReference type="ChEBI" id="CHEBI:46951"/>
        <dbReference type="ChEBI" id="CHEBI:57540"/>
        <dbReference type="ChEBI" id="CHEBI:57945"/>
        <dbReference type="ChEBI" id="CHEBI:60087"/>
        <dbReference type="EC" id="1.3.1.87"/>
    </reaction>
</comment>
<comment type="catalytic activity">
    <reaction evidence="1">
        <text>(2E)-3-(cis-5,6-dihydroxycyclohexa-1,3-dien-1-yl)prop-2-enoate + NAD(+) = (2E)-3-(2,3-dihydroxyphenyl)prop-2-enoate + NADH + H(+)</text>
        <dbReference type="Rhea" id="RHEA:25066"/>
        <dbReference type="ChEBI" id="CHEBI:15378"/>
        <dbReference type="ChEBI" id="CHEBI:57540"/>
        <dbReference type="ChEBI" id="CHEBI:57945"/>
        <dbReference type="ChEBI" id="CHEBI:58642"/>
        <dbReference type="ChEBI" id="CHEBI:61451"/>
        <dbReference type="EC" id="1.3.1.87"/>
    </reaction>
</comment>
<comment type="pathway">
    <text evidence="1">Aromatic compound metabolism; 3-phenylpropanoate degradation.</text>
</comment>
<comment type="similarity">
    <text evidence="1">Belongs to the short-chain dehydrogenases/reductases (SDR) family.</text>
</comment>
<name>HCAB_ECOBW</name>
<sequence length="270" mass="28500">MSDLHNESIFITGGGSGLGLALVERFIEEGAQVATLELSAAKVASLRQRFGEHILAVEGNVTCYADYQRAVDQILTRSGKLDCFIGNAGIWDHNASLVNTPAETLETGFHELFNVNVLGYLLGAKACAPALIASEGSMIFTLSNAAWYPGGGGPLYTASKHAATGLIRQLAYELAPKVRVNGVGPCGMASDLRGPQALGQSETSIMQSLTPEKIAAILPLQFFPQPADFTGPYVMLTSRRNNRALSGVMINADAGLAIRGIRHVAAGLDL</sequence>
<feature type="chain" id="PRO_1000215849" description="3-phenylpropionate-dihydrodiol/cinnamic acid-dihydrodiol dehydrogenase">
    <location>
        <begin position="1"/>
        <end position="270"/>
    </location>
</feature>
<feature type="active site" description="Proton acceptor" evidence="1">
    <location>
        <position position="156"/>
    </location>
</feature>
<feature type="binding site" evidence="1">
    <location>
        <begin position="10"/>
        <end position="34"/>
    </location>
    <ligand>
        <name>NAD(+)</name>
        <dbReference type="ChEBI" id="CHEBI:57540"/>
    </ligand>
</feature>
<feature type="binding site" evidence="1">
    <location>
        <position position="143"/>
    </location>
    <ligand>
        <name>substrate</name>
    </ligand>
</feature>
<gene>
    <name evidence="1" type="primary">hcaB</name>
    <name type="ordered locus">BWG_2305</name>
</gene>
<accession>C4ZXB6</accession>
<keyword id="KW-0058">Aromatic hydrocarbons catabolism</keyword>
<keyword id="KW-0520">NAD</keyword>
<keyword id="KW-0560">Oxidoreductase</keyword>
<proteinExistence type="inferred from homology"/>
<protein>
    <recommendedName>
        <fullName evidence="1">3-phenylpropionate-dihydrodiol/cinnamic acid-dihydrodiol dehydrogenase</fullName>
        <ecNumber evidence="1">1.3.1.87</ecNumber>
    </recommendedName>
    <alternativeName>
        <fullName evidence="1">2,3-dihydroxy-2,3-dihydrophenylpropionate dehydrogenase</fullName>
    </alternativeName>
    <alternativeName>
        <fullName evidence="1">3-(cis-5,6-dihydroxycyclohexa-1,3-dien-1-yl)propanoate dehydrogenase</fullName>
    </alternativeName>
    <alternativeName>
        <fullName evidence="1">CI-dihydrodiol dehydrogenase</fullName>
    </alternativeName>
    <alternativeName>
        <fullName evidence="1">Cis-3-(2-carboxyethenyl)-3,5-cyclohexadiene-1,2-diol dehydrogenase</fullName>
    </alternativeName>
    <alternativeName>
        <fullName evidence="1">Cis-3-(2-carboxyethyl)-3,5-cyclohexadiene-1,2-diol dehydrogenase</fullName>
    </alternativeName>
    <alternativeName>
        <fullName evidence="1">PP-dihydrodiol dehydrogenase</fullName>
    </alternativeName>
</protein>
<dbReference type="EC" id="1.3.1.87" evidence="1"/>
<dbReference type="EMBL" id="CP001396">
    <property type="protein sequence ID" value="ACR61743.1"/>
    <property type="molecule type" value="Genomic_DNA"/>
</dbReference>
<dbReference type="RefSeq" id="WP_001281379.1">
    <property type="nucleotide sequence ID" value="NC_012759.1"/>
</dbReference>
<dbReference type="SMR" id="C4ZXB6"/>
<dbReference type="KEGG" id="ebw:BWG_2305"/>
<dbReference type="HOGENOM" id="CLU_010194_1_0_6"/>
<dbReference type="UniPathway" id="UPA00714"/>
<dbReference type="GO" id="GO:0018498">
    <property type="term" value="F:2,3-dihydroxy-2,3-dihydro-phenylpropionate dehydrogenase activity"/>
    <property type="evidence" value="ECO:0007669"/>
    <property type="project" value="UniProtKB-UniRule"/>
</dbReference>
<dbReference type="GO" id="GO:0019380">
    <property type="term" value="P:3-phenylpropionate catabolic process"/>
    <property type="evidence" value="ECO:0007669"/>
    <property type="project" value="UniProtKB-UniRule"/>
</dbReference>
<dbReference type="CDD" id="cd05348">
    <property type="entry name" value="BphB-like_SDR_c"/>
    <property type="match status" value="1"/>
</dbReference>
<dbReference type="FunFam" id="3.40.50.720:FF:000151">
    <property type="entry name" value="3-phenylpropionate-dihydrodiol/cinnamic acid-dihydrodiol dehydrogenase"/>
    <property type="match status" value="1"/>
</dbReference>
<dbReference type="Gene3D" id="3.40.50.720">
    <property type="entry name" value="NAD(P)-binding Rossmann-like Domain"/>
    <property type="match status" value="1"/>
</dbReference>
<dbReference type="HAMAP" id="MF_01647">
    <property type="entry name" value="HcaB"/>
    <property type="match status" value="1"/>
</dbReference>
<dbReference type="InterPro" id="IPR047950">
    <property type="entry name" value="BphB-like_SDR"/>
</dbReference>
<dbReference type="InterPro" id="IPR023643">
    <property type="entry name" value="Dihydrodiol_DH_HcaB"/>
</dbReference>
<dbReference type="InterPro" id="IPR036291">
    <property type="entry name" value="NAD(P)-bd_dom_sf"/>
</dbReference>
<dbReference type="InterPro" id="IPR020904">
    <property type="entry name" value="Sc_DH/Rdtase_CS"/>
</dbReference>
<dbReference type="InterPro" id="IPR002347">
    <property type="entry name" value="SDR_fam"/>
</dbReference>
<dbReference type="NCBIfam" id="NF042950">
    <property type="entry name" value="3PPDhyd_Dh_HcaB"/>
    <property type="match status" value="1"/>
</dbReference>
<dbReference type="NCBIfam" id="NF004849">
    <property type="entry name" value="PRK06200.1"/>
    <property type="match status" value="1"/>
</dbReference>
<dbReference type="PANTHER" id="PTHR43943:SF17">
    <property type="entry name" value="3-PHENYLPROPIONATE-DIHYDRODIOL_CINNAMIC ACID-DIHYDRODIOL DEHYDROGENASE"/>
    <property type="match status" value="1"/>
</dbReference>
<dbReference type="PANTHER" id="PTHR43943">
    <property type="entry name" value="DEHYDROGENASE/REDUCTASE (SDR FAMILY) MEMBER 4"/>
    <property type="match status" value="1"/>
</dbReference>
<dbReference type="Pfam" id="PF00106">
    <property type="entry name" value="adh_short"/>
    <property type="match status" value="1"/>
</dbReference>
<dbReference type="PRINTS" id="PR00081">
    <property type="entry name" value="GDHRDH"/>
</dbReference>
<dbReference type="PRINTS" id="PR00080">
    <property type="entry name" value="SDRFAMILY"/>
</dbReference>
<dbReference type="SUPFAM" id="SSF51735">
    <property type="entry name" value="NAD(P)-binding Rossmann-fold domains"/>
    <property type="match status" value="1"/>
</dbReference>
<dbReference type="PROSITE" id="PS00061">
    <property type="entry name" value="ADH_SHORT"/>
    <property type="match status" value="1"/>
</dbReference>
<organism>
    <name type="scientific">Escherichia coli (strain K12 / MC4100 / BW2952)</name>
    <dbReference type="NCBI Taxonomy" id="595496"/>
    <lineage>
        <taxon>Bacteria</taxon>
        <taxon>Pseudomonadati</taxon>
        <taxon>Pseudomonadota</taxon>
        <taxon>Gammaproteobacteria</taxon>
        <taxon>Enterobacterales</taxon>
        <taxon>Enterobacteriaceae</taxon>
        <taxon>Escherichia</taxon>
    </lineage>
</organism>
<reference key="1">
    <citation type="journal article" date="2009" name="J. Bacteriol.">
        <title>Genomic sequencing reveals regulatory mutations and recombinational events in the widely used MC4100 lineage of Escherichia coli K-12.</title>
        <authorList>
            <person name="Ferenci T."/>
            <person name="Zhou Z."/>
            <person name="Betteridge T."/>
            <person name="Ren Y."/>
            <person name="Liu Y."/>
            <person name="Feng L."/>
            <person name="Reeves P.R."/>
            <person name="Wang L."/>
        </authorList>
    </citation>
    <scope>NUCLEOTIDE SEQUENCE [LARGE SCALE GENOMIC DNA]</scope>
    <source>
        <strain>K12 / MC4100 / BW2952</strain>
    </source>
</reference>